<comment type="similarity">
    <text evidence="2">Belongs to the RRP15 family.</text>
</comment>
<feature type="chain" id="PRO_0000273220" description="RRP15-like protein">
    <location>
        <begin position="1"/>
        <end position="279"/>
    </location>
</feature>
<feature type="region of interest" description="Disordered" evidence="1">
    <location>
        <begin position="1"/>
        <end position="40"/>
    </location>
</feature>
<feature type="region of interest" description="Disordered" evidence="1">
    <location>
        <begin position="56"/>
        <end position="120"/>
    </location>
</feature>
<feature type="region of interest" description="Disordered" evidence="1">
    <location>
        <begin position="200"/>
        <end position="279"/>
    </location>
</feature>
<feature type="compositionally biased region" description="Basic and acidic residues" evidence="1">
    <location>
        <begin position="73"/>
        <end position="83"/>
    </location>
</feature>
<feature type="compositionally biased region" description="Acidic residues" evidence="1">
    <location>
        <begin position="93"/>
        <end position="104"/>
    </location>
</feature>
<feature type="compositionally biased region" description="Acidic residues" evidence="1">
    <location>
        <begin position="213"/>
        <end position="224"/>
    </location>
</feature>
<feature type="compositionally biased region" description="Basic and acidic residues" evidence="1">
    <location>
        <begin position="232"/>
        <end position="245"/>
    </location>
</feature>
<feature type="compositionally biased region" description="Acidic residues" evidence="1">
    <location>
        <begin position="267"/>
        <end position="279"/>
    </location>
</feature>
<organism>
    <name type="scientific">Drosophila pseudoobscura pseudoobscura</name>
    <name type="common">Fruit fly</name>
    <dbReference type="NCBI Taxonomy" id="46245"/>
    <lineage>
        <taxon>Eukaryota</taxon>
        <taxon>Metazoa</taxon>
        <taxon>Ecdysozoa</taxon>
        <taxon>Arthropoda</taxon>
        <taxon>Hexapoda</taxon>
        <taxon>Insecta</taxon>
        <taxon>Pterygota</taxon>
        <taxon>Neoptera</taxon>
        <taxon>Endopterygota</taxon>
        <taxon>Diptera</taxon>
        <taxon>Brachycera</taxon>
        <taxon>Muscomorpha</taxon>
        <taxon>Ephydroidea</taxon>
        <taxon>Drosophilidae</taxon>
        <taxon>Drosophila</taxon>
        <taxon>Sophophora</taxon>
    </lineage>
</organism>
<sequence>MALLTAKRPKKEAAPATDTSNNESDSEDSQNVDGDTGANAGWADCIGKVLKSKSVGPTVLSRAKKNPAVVRSKTSEAAKKPGFDFEVVGGDVKEEDDDDEEDGDADKSALDATLTKTERRNVPLQLRVKPSYQDLERERTLRKVATRGVVQFFNAVRIQQKDLEQQLADAGPLDSRQDAVLNNINKRKFLDVLMSGKRAKSTAIDNAVKKEEQETDDDDEDDTAEASSTGKKKSEWNVLREDFMTNKKIKHWDEEDDEGSDQGANNDEADDSDDDDEED</sequence>
<proteinExistence type="inferred from homology"/>
<name>RRP15_DROPS</name>
<gene>
    <name type="ORF">GA17706</name>
</gene>
<accession>Q296J6</accession>
<reference key="1">
    <citation type="journal article" date="2005" name="Genome Res.">
        <title>Comparative genome sequencing of Drosophila pseudoobscura: chromosomal, gene, and cis-element evolution.</title>
        <authorList>
            <person name="Richards S."/>
            <person name="Liu Y."/>
            <person name="Bettencourt B.R."/>
            <person name="Hradecky P."/>
            <person name="Letovsky S."/>
            <person name="Nielsen R."/>
            <person name="Thornton K."/>
            <person name="Hubisz M.J."/>
            <person name="Chen R."/>
            <person name="Meisel R.P."/>
            <person name="Couronne O."/>
            <person name="Hua S."/>
            <person name="Smith M.A."/>
            <person name="Zhang P."/>
            <person name="Liu J."/>
            <person name="Bussemaker H.J."/>
            <person name="van Batenburg M.F."/>
            <person name="Howells S.L."/>
            <person name="Scherer S.E."/>
            <person name="Sodergren E."/>
            <person name="Matthews B.B."/>
            <person name="Crosby M.A."/>
            <person name="Schroeder A.J."/>
            <person name="Ortiz-Barrientos D."/>
            <person name="Rives C.M."/>
            <person name="Metzker M.L."/>
            <person name="Muzny D.M."/>
            <person name="Scott G."/>
            <person name="Steffen D."/>
            <person name="Wheeler D.A."/>
            <person name="Worley K.C."/>
            <person name="Havlak P."/>
            <person name="Durbin K.J."/>
            <person name="Egan A."/>
            <person name="Gill R."/>
            <person name="Hume J."/>
            <person name="Morgan M.B."/>
            <person name="Miner G."/>
            <person name="Hamilton C."/>
            <person name="Huang Y."/>
            <person name="Waldron L."/>
            <person name="Verduzco D."/>
            <person name="Clerc-Blankenburg K.P."/>
            <person name="Dubchak I."/>
            <person name="Noor M.A.F."/>
            <person name="Anderson W."/>
            <person name="White K.P."/>
            <person name="Clark A.G."/>
            <person name="Schaeffer S.W."/>
            <person name="Gelbart W.M."/>
            <person name="Weinstock G.M."/>
            <person name="Gibbs R.A."/>
        </authorList>
    </citation>
    <scope>NUCLEOTIDE SEQUENCE [LARGE SCALE GENOMIC DNA]</scope>
    <source>
        <strain>MV2-25 / Tucson 14011-0121.94</strain>
    </source>
</reference>
<protein>
    <recommendedName>
        <fullName>RRP15-like protein</fullName>
    </recommendedName>
</protein>
<dbReference type="EMBL" id="CM000070">
    <property type="protein sequence ID" value="EAL28461.1"/>
    <property type="molecule type" value="Genomic_DNA"/>
</dbReference>
<dbReference type="RefSeq" id="XP_001359316.1">
    <property type="nucleotide sequence ID" value="XM_001359279.4"/>
</dbReference>
<dbReference type="SMR" id="Q296J6"/>
<dbReference type="FunCoup" id="Q296J6">
    <property type="interactions" value="592"/>
</dbReference>
<dbReference type="STRING" id="46245.Q296J6"/>
<dbReference type="EnsemblMetazoa" id="FBtr0285946">
    <property type="protein sequence ID" value="FBpp0284384"/>
    <property type="gene ID" value="FBgn0077716"/>
</dbReference>
<dbReference type="KEGG" id="dpo:4802388"/>
<dbReference type="eggNOG" id="KOG2974">
    <property type="taxonomic scope" value="Eukaryota"/>
</dbReference>
<dbReference type="HOGENOM" id="CLU_079732_1_0_1"/>
<dbReference type="InParanoid" id="Q296J6"/>
<dbReference type="OMA" id="NAGWADC"/>
<dbReference type="PhylomeDB" id="Q296J6"/>
<dbReference type="Proteomes" id="UP000001819">
    <property type="component" value="Chromosome 2"/>
</dbReference>
<dbReference type="Bgee" id="FBgn0077716">
    <property type="expression patterns" value="Expressed in female reproductive system and 3 other cell types or tissues"/>
</dbReference>
<dbReference type="GO" id="GO:0030687">
    <property type="term" value="C:preribosome, large subunit precursor"/>
    <property type="evidence" value="ECO:0007669"/>
    <property type="project" value="TreeGrafter"/>
</dbReference>
<dbReference type="GO" id="GO:0000460">
    <property type="term" value="P:maturation of 5.8S rRNA"/>
    <property type="evidence" value="ECO:0007669"/>
    <property type="project" value="TreeGrafter"/>
</dbReference>
<dbReference type="GO" id="GO:0000470">
    <property type="term" value="P:maturation of LSU-rRNA"/>
    <property type="evidence" value="ECO:0007669"/>
    <property type="project" value="TreeGrafter"/>
</dbReference>
<dbReference type="InterPro" id="IPR012459">
    <property type="entry name" value="Rrp15"/>
</dbReference>
<dbReference type="PANTHER" id="PTHR13245">
    <property type="entry name" value="RRP15-LIKE PROTEIN"/>
    <property type="match status" value="1"/>
</dbReference>
<dbReference type="PANTHER" id="PTHR13245:SF14">
    <property type="entry name" value="RRP15-LIKE PROTEIN"/>
    <property type="match status" value="1"/>
</dbReference>
<dbReference type="Pfam" id="PF07890">
    <property type="entry name" value="Rrp15p"/>
    <property type="match status" value="1"/>
</dbReference>
<evidence type="ECO:0000256" key="1">
    <source>
        <dbReference type="SAM" id="MobiDB-lite"/>
    </source>
</evidence>
<evidence type="ECO:0000305" key="2"/>
<keyword id="KW-1185">Reference proteome</keyword>